<organism>
    <name type="scientific">Leptospira borgpetersenii serovar Hardjo-bovis (strain JB197)</name>
    <dbReference type="NCBI Taxonomy" id="355277"/>
    <lineage>
        <taxon>Bacteria</taxon>
        <taxon>Pseudomonadati</taxon>
        <taxon>Spirochaetota</taxon>
        <taxon>Spirochaetia</taxon>
        <taxon>Leptospirales</taxon>
        <taxon>Leptospiraceae</taxon>
        <taxon>Leptospira</taxon>
    </lineage>
</organism>
<accession>Q04NF4</accession>
<gene>
    <name evidence="1" type="primary">cbiD</name>
    <name type="ordered locus">LBJ_4180</name>
</gene>
<protein>
    <recommendedName>
        <fullName evidence="1">Cobalt-precorrin-5B C(1)-methyltransferase</fullName>
        <ecNumber evidence="1">2.1.1.195</ecNumber>
    </recommendedName>
    <alternativeName>
        <fullName evidence="1">Cobalt-precorrin-6A synthase</fullName>
    </alternativeName>
</protein>
<reference key="1">
    <citation type="journal article" date="2006" name="Proc. Natl. Acad. Sci. U.S.A.">
        <title>Genome reduction in Leptospira borgpetersenii reflects limited transmission potential.</title>
        <authorList>
            <person name="Bulach D.M."/>
            <person name="Zuerner R.L."/>
            <person name="Wilson P."/>
            <person name="Seemann T."/>
            <person name="McGrath A."/>
            <person name="Cullen P.A."/>
            <person name="Davis J."/>
            <person name="Johnson M."/>
            <person name="Kuczek E."/>
            <person name="Alt D.P."/>
            <person name="Peterson-Burch B."/>
            <person name="Coppel R.L."/>
            <person name="Rood J.I."/>
            <person name="Davies J.K."/>
            <person name="Adler B."/>
        </authorList>
    </citation>
    <scope>NUCLEOTIDE SEQUENCE [LARGE SCALE GENOMIC DNA]</scope>
    <source>
        <strain>JB197</strain>
    </source>
</reference>
<name>CBID_LEPBJ</name>
<proteinExistence type="inferred from homology"/>
<dbReference type="EC" id="2.1.1.195" evidence="1"/>
<dbReference type="EMBL" id="CP000351">
    <property type="protein sequence ID" value="ABJ77566.1"/>
    <property type="molecule type" value="Genomic_DNA"/>
</dbReference>
<dbReference type="RefSeq" id="WP_011671370.1">
    <property type="nucleotide sequence ID" value="NC_008511.1"/>
</dbReference>
<dbReference type="SMR" id="Q04NF4"/>
<dbReference type="KEGG" id="lbj:LBJ_4180"/>
<dbReference type="HOGENOM" id="CLU_041273_0_0_12"/>
<dbReference type="UniPathway" id="UPA00148">
    <property type="reaction ID" value="UER00227"/>
</dbReference>
<dbReference type="Proteomes" id="UP000000656">
    <property type="component" value="Chromosome 2"/>
</dbReference>
<dbReference type="GO" id="GO:0043780">
    <property type="term" value="F:cobalt-precorrin-5B C1-methyltransferase activity"/>
    <property type="evidence" value="ECO:0007669"/>
    <property type="project" value="RHEA"/>
</dbReference>
<dbReference type="GO" id="GO:0019251">
    <property type="term" value="P:anaerobic cobalamin biosynthetic process"/>
    <property type="evidence" value="ECO:0007669"/>
    <property type="project" value="UniProtKB-UniRule"/>
</dbReference>
<dbReference type="GO" id="GO:0032259">
    <property type="term" value="P:methylation"/>
    <property type="evidence" value="ECO:0007669"/>
    <property type="project" value="UniProtKB-KW"/>
</dbReference>
<dbReference type="Gene3D" id="3.30.2110.10">
    <property type="entry name" value="CbiD-like"/>
    <property type="match status" value="1"/>
</dbReference>
<dbReference type="HAMAP" id="MF_00787">
    <property type="entry name" value="CbiD"/>
    <property type="match status" value="1"/>
</dbReference>
<dbReference type="InterPro" id="IPR002748">
    <property type="entry name" value="CbiD"/>
</dbReference>
<dbReference type="InterPro" id="IPR036074">
    <property type="entry name" value="CbiD_sf"/>
</dbReference>
<dbReference type="NCBIfam" id="TIGR00312">
    <property type="entry name" value="cbiD"/>
    <property type="match status" value="1"/>
</dbReference>
<dbReference type="NCBIfam" id="NF000849">
    <property type="entry name" value="PRK00075.1-1"/>
    <property type="match status" value="1"/>
</dbReference>
<dbReference type="PANTHER" id="PTHR35863">
    <property type="entry name" value="COBALT-PRECORRIN-5B C(1)-METHYLTRANSFERASE"/>
    <property type="match status" value="1"/>
</dbReference>
<dbReference type="PANTHER" id="PTHR35863:SF1">
    <property type="entry name" value="COBALT-PRECORRIN-5B C(1)-METHYLTRANSFERASE"/>
    <property type="match status" value="1"/>
</dbReference>
<dbReference type="Pfam" id="PF01888">
    <property type="entry name" value="CbiD"/>
    <property type="match status" value="1"/>
</dbReference>
<dbReference type="PIRSF" id="PIRSF026782">
    <property type="entry name" value="CbiD"/>
    <property type="match status" value="1"/>
</dbReference>
<dbReference type="SUPFAM" id="SSF111342">
    <property type="entry name" value="CbiD-like"/>
    <property type="match status" value="1"/>
</dbReference>
<sequence>MSTKELREGFTTGACSAAAAKAATRLLLKGEPVLEIETTLPNDRQVLFPVKRCQLEGEVAICSVVKDAGDDPDCTHGAELTARVRLTKESKIVLKGGDGVATVTKTGLGIEVGEPAINPIPRKNISEMILEELKGSSFNGAEVEISVPGGQEMAKKTMNKRLGLIGGISIIGTTGIVKPFSTAAFKASVIQAIRMAREYEVDTVILTTGGKSEKFAMNLFPNLKELSFIQAGDFIGTGIKTSVKEFIRHVIVVGMIGKLSKMADGVMMTHRGGSSVNTKMLSDIARSVGIPEPIAIDIQNANTARHALEICKENGYEIITTKICEIVARNCSKHAGTNMSISCYMVDFDGTLLGKFENFSQKSKLRKGI</sequence>
<keyword id="KW-0169">Cobalamin biosynthesis</keyword>
<keyword id="KW-0489">Methyltransferase</keyword>
<keyword id="KW-0949">S-adenosyl-L-methionine</keyword>
<keyword id="KW-0808">Transferase</keyword>
<feature type="chain" id="PRO_1000046859" description="Cobalt-precorrin-5B C(1)-methyltransferase">
    <location>
        <begin position="1"/>
        <end position="369"/>
    </location>
</feature>
<evidence type="ECO:0000255" key="1">
    <source>
        <dbReference type="HAMAP-Rule" id="MF_00787"/>
    </source>
</evidence>
<comment type="function">
    <text evidence="1">Catalyzes the methylation of C-1 in cobalt-precorrin-5B to form cobalt-precorrin-6A.</text>
</comment>
<comment type="catalytic activity">
    <reaction evidence="1">
        <text>Co-precorrin-5B + S-adenosyl-L-methionine = Co-precorrin-6A + S-adenosyl-L-homocysteine</text>
        <dbReference type="Rhea" id="RHEA:26285"/>
        <dbReference type="ChEBI" id="CHEBI:57856"/>
        <dbReference type="ChEBI" id="CHEBI:59789"/>
        <dbReference type="ChEBI" id="CHEBI:60063"/>
        <dbReference type="ChEBI" id="CHEBI:60064"/>
        <dbReference type="EC" id="2.1.1.195"/>
    </reaction>
</comment>
<comment type="pathway">
    <text evidence="1">Cofactor biosynthesis; adenosylcobalamin biosynthesis; cob(II)yrinate a,c-diamide from sirohydrochlorin (anaerobic route): step 6/10.</text>
</comment>
<comment type="similarity">
    <text evidence="1">Belongs to the CbiD family.</text>
</comment>